<sequence length="273" mass="30547">MAFEDIPFLQYLGNAVDILLVWYVIYKLIMVIRGTKAVQLLKGIVVIVLVRMASQYLGLSTLQWLMDQAITWGFLAIIIIFQPELRRALEQLGRGRFFSRSGTPVEEAQQKTIEAITKAINYMAKRRIGALLTIERDTGMGDYIETGIPLNAKVSSELLINIFIPNTPLHDGAVIMKNNEIAAAACYLPLSESPFISKELGTRHRAAVGISEVTDSLTIIVSEETGGVSVAKNGDLHRELTEEALKEMLEAEFKKNTRDTSSNRWYWRGKKNG</sequence>
<organism>
    <name type="scientific">Bacillus subtilis (strain 168)</name>
    <dbReference type="NCBI Taxonomy" id="224308"/>
    <lineage>
        <taxon>Bacteria</taxon>
        <taxon>Bacillati</taxon>
        <taxon>Bacillota</taxon>
        <taxon>Bacilli</taxon>
        <taxon>Bacillales</taxon>
        <taxon>Bacillaceae</taxon>
        <taxon>Bacillus</taxon>
    </lineage>
</organism>
<dbReference type="EC" id="2.7.7.85" evidence="1"/>
<dbReference type="EMBL" id="AB002150">
    <property type="protein sequence ID" value="BAA19509.1"/>
    <property type="molecule type" value="Genomic_DNA"/>
</dbReference>
<dbReference type="EMBL" id="AL009126">
    <property type="protein sequence ID" value="CAB11951.2"/>
    <property type="molecule type" value="Genomic_DNA"/>
</dbReference>
<dbReference type="PIR" id="H69744">
    <property type="entry name" value="H69744"/>
</dbReference>
<dbReference type="RefSeq" id="NP_388056.2">
    <property type="nucleotide sequence ID" value="NC_000964.3"/>
</dbReference>
<dbReference type="RefSeq" id="WP_003223651.1">
    <property type="nucleotide sequence ID" value="NZ_OZ025638.1"/>
</dbReference>
<dbReference type="PDB" id="6HUW">
    <property type="method" value="X-ray"/>
    <property type="resolution" value="2.80 A"/>
    <property type="chains" value="A/B=97-273"/>
</dbReference>
<dbReference type="PDB" id="7OJS">
    <property type="method" value="X-ray"/>
    <property type="resolution" value="4.20 A"/>
    <property type="chains" value="D/E/H/I/K/L=107-273"/>
</dbReference>
<dbReference type="PDB" id="7OLH">
    <property type="method" value="X-ray"/>
    <property type="resolution" value="3.65 A"/>
    <property type="chains" value="G/H/I/J/K/L=107-273"/>
</dbReference>
<dbReference type="PDB" id="8OGK">
    <property type="method" value="X-ray"/>
    <property type="resolution" value="1.18 A"/>
    <property type="chains" value="A/B=103-254"/>
</dbReference>
<dbReference type="PDB" id="8OGM">
    <property type="method" value="X-ray"/>
    <property type="resolution" value="1.10 A"/>
    <property type="chains" value="A/B=103-254"/>
</dbReference>
<dbReference type="PDB" id="8OGN">
    <property type="method" value="X-ray"/>
    <property type="resolution" value="1.29 A"/>
    <property type="chains" value="A/B=103-254"/>
</dbReference>
<dbReference type="PDB" id="8OGO">
    <property type="method" value="X-ray"/>
    <property type="resolution" value="1.21 A"/>
    <property type="chains" value="A/B=103-254"/>
</dbReference>
<dbReference type="PDB" id="8OGP">
    <property type="method" value="X-ray"/>
    <property type="resolution" value="1.22 A"/>
    <property type="chains" value="A/B=103-254"/>
</dbReference>
<dbReference type="PDB" id="8OGQ">
    <property type="method" value="X-ray"/>
    <property type="resolution" value="1.42 A"/>
    <property type="chains" value="A/B=103-254"/>
</dbReference>
<dbReference type="PDB" id="8OGR">
    <property type="method" value="X-ray"/>
    <property type="resolution" value="1.35 A"/>
    <property type="chains" value="A/B=103-254"/>
</dbReference>
<dbReference type="PDB" id="8OGS">
    <property type="method" value="X-ray"/>
    <property type="resolution" value="1.25 A"/>
    <property type="chains" value="A/B=103-254"/>
</dbReference>
<dbReference type="PDB" id="8OGT">
    <property type="method" value="X-ray"/>
    <property type="resolution" value="1.50 A"/>
    <property type="chains" value="A/B=103-254"/>
</dbReference>
<dbReference type="PDB" id="8OGU">
    <property type="method" value="X-ray"/>
    <property type="resolution" value="1.41 A"/>
    <property type="chains" value="A/B=103-254"/>
</dbReference>
<dbReference type="PDB" id="8OGV">
    <property type="method" value="X-ray"/>
    <property type="resolution" value="1.25 A"/>
    <property type="chains" value="A/B=103-254"/>
</dbReference>
<dbReference type="PDB" id="8OGW">
    <property type="method" value="X-ray"/>
    <property type="resolution" value="1.17 A"/>
    <property type="chains" value="A/B=103-254"/>
</dbReference>
<dbReference type="PDB" id="8OGY">
    <property type="method" value="X-ray"/>
    <property type="resolution" value="1.23 A"/>
    <property type="chains" value="A/B=103-254"/>
</dbReference>
<dbReference type="PDB" id="8OGZ">
    <property type="method" value="X-ray"/>
    <property type="resolution" value="1.14 A"/>
    <property type="chains" value="A/B=103-254"/>
</dbReference>
<dbReference type="PDB" id="8OH0">
    <property type="method" value="X-ray"/>
    <property type="resolution" value="1.27 A"/>
    <property type="chains" value="A/B=103-254"/>
</dbReference>
<dbReference type="PDB" id="8OH1">
    <property type="method" value="X-ray"/>
    <property type="resolution" value="1.22 A"/>
    <property type="chains" value="A/B=103-254"/>
</dbReference>
<dbReference type="PDB" id="8OHB">
    <property type="method" value="X-ray"/>
    <property type="resolution" value="1.11 A"/>
    <property type="chains" value="A/B=103-254"/>
</dbReference>
<dbReference type="PDB" id="8OHC">
    <property type="method" value="X-ray"/>
    <property type="resolution" value="1.17 A"/>
    <property type="chains" value="A/B=103-254"/>
</dbReference>
<dbReference type="PDB" id="8OHE">
    <property type="method" value="X-ray"/>
    <property type="resolution" value="1.15 A"/>
    <property type="chains" value="A/B=103-254"/>
</dbReference>
<dbReference type="PDB" id="8OHF">
    <property type="method" value="X-ray"/>
    <property type="resolution" value="1.22 A"/>
    <property type="chains" value="A/B=103-254"/>
</dbReference>
<dbReference type="PDB" id="8OHG">
    <property type="method" value="X-ray"/>
    <property type="resolution" value="1.25 A"/>
    <property type="chains" value="A/B=103-254"/>
</dbReference>
<dbReference type="PDB" id="8OHH">
    <property type="method" value="X-ray"/>
    <property type="resolution" value="1.30 A"/>
    <property type="chains" value="A/B=103-254"/>
</dbReference>
<dbReference type="PDB" id="8OHJ">
    <property type="method" value="X-ray"/>
    <property type="resolution" value="1.22 A"/>
    <property type="chains" value="A/B=103-254"/>
</dbReference>
<dbReference type="PDB" id="8OHK">
    <property type="method" value="X-ray"/>
    <property type="resolution" value="1.26 A"/>
    <property type="chains" value="A/B=103-254"/>
</dbReference>
<dbReference type="PDB" id="8OHL">
    <property type="method" value="X-ray"/>
    <property type="resolution" value="1.29 A"/>
    <property type="chains" value="A/B=103-254"/>
</dbReference>
<dbReference type="PDB" id="8OHO">
    <property type="method" value="X-ray"/>
    <property type="resolution" value="1.32 A"/>
    <property type="chains" value="A/B=103-254"/>
</dbReference>
<dbReference type="PDBsum" id="6HUW"/>
<dbReference type="PDBsum" id="7OJS"/>
<dbReference type="PDBsum" id="7OLH"/>
<dbReference type="PDBsum" id="8OGK"/>
<dbReference type="PDBsum" id="8OGM"/>
<dbReference type="PDBsum" id="8OGN"/>
<dbReference type="PDBsum" id="8OGO"/>
<dbReference type="PDBsum" id="8OGP"/>
<dbReference type="PDBsum" id="8OGQ"/>
<dbReference type="PDBsum" id="8OGR"/>
<dbReference type="PDBsum" id="8OGS"/>
<dbReference type="PDBsum" id="8OGT"/>
<dbReference type="PDBsum" id="8OGU"/>
<dbReference type="PDBsum" id="8OGV"/>
<dbReference type="PDBsum" id="8OGW"/>
<dbReference type="PDBsum" id="8OGY"/>
<dbReference type="PDBsum" id="8OGZ"/>
<dbReference type="PDBsum" id="8OH0"/>
<dbReference type="PDBsum" id="8OH1"/>
<dbReference type="PDBsum" id="8OHB"/>
<dbReference type="PDBsum" id="8OHC"/>
<dbReference type="PDBsum" id="8OHE"/>
<dbReference type="PDBsum" id="8OHF"/>
<dbReference type="PDBsum" id="8OHG"/>
<dbReference type="PDBsum" id="8OHH"/>
<dbReference type="PDBsum" id="8OHJ"/>
<dbReference type="PDBsum" id="8OHK"/>
<dbReference type="PDBsum" id="8OHL"/>
<dbReference type="PDBsum" id="8OHO"/>
<dbReference type="SASBDB" id="Q45589"/>
<dbReference type="SMR" id="Q45589"/>
<dbReference type="FunCoup" id="Q45589">
    <property type="interactions" value="83"/>
</dbReference>
<dbReference type="STRING" id="224308.BSU01750"/>
<dbReference type="PaxDb" id="224308-BSU01750"/>
<dbReference type="EnsemblBacteria" id="CAB11951">
    <property type="protein sequence ID" value="CAB11951"/>
    <property type="gene ID" value="BSU_01750"/>
</dbReference>
<dbReference type="GeneID" id="76976575"/>
<dbReference type="GeneID" id="938735"/>
<dbReference type="KEGG" id="bsu:BSU01750"/>
<dbReference type="PATRIC" id="fig|224308.179.peg.181"/>
<dbReference type="eggNOG" id="COG1624">
    <property type="taxonomic scope" value="Bacteria"/>
</dbReference>
<dbReference type="InParanoid" id="Q45589"/>
<dbReference type="OrthoDB" id="9807385at2"/>
<dbReference type="PhylomeDB" id="Q45589"/>
<dbReference type="BioCyc" id="BSUB:BSU01750-MONOMER"/>
<dbReference type="BRENDA" id="2.7.7.85">
    <property type="organism ID" value="658"/>
</dbReference>
<dbReference type="PRO" id="PR:Q45589"/>
<dbReference type="Proteomes" id="UP000001570">
    <property type="component" value="Chromosome"/>
</dbReference>
<dbReference type="GO" id="GO:0005886">
    <property type="term" value="C:plasma membrane"/>
    <property type="evidence" value="ECO:0000314"/>
    <property type="project" value="UniProtKB"/>
</dbReference>
<dbReference type="GO" id="GO:0004016">
    <property type="term" value="F:adenylate cyclase activity"/>
    <property type="evidence" value="ECO:0000314"/>
    <property type="project" value="UniProtKB"/>
</dbReference>
<dbReference type="GO" id="GO:0005524">
    <property type="term" value="F:ATP binding"/>
    <property type="evidence" value="ECO:0007669"/>
    <property type="project" value="UniProtKB-UniRule"/>
</dbReference>
<dbReference type="GO" id="GO:0106408">
    <property type="term" value="F:diadenylate cyclase activity"/>
    <property type="evidence" value="ECO:0007669"/>
    <property type="project" value="UniProtKB-EC"/>
</dbReference>
<dbReference type="GO" id="GO:0006171">
    <property type="term" value="P:cAMP biosynthetic process"/>
    <property type="evidence" value="ECO:0007669"/>
    <property type="project" value="InterPro"/>
</dbReference>
<dbReference type="FunFam" id="3.40.1700.10:FF:000002">
    <property type="entry name" value="Diadenylate cyclase"/>
    <property type="match status" value="1"/>
</dbReference>
<dbReference type="Gene3D" id="3.40.1700.10">
    <property type="entry name" value="DNA integrity scanning protein, DisA, N-terminal domain"/>
    <property type="match status" value="1"/>
</dbReference>
<dbReference type="HAMAP" id="MF_01499">
    <property type="entry name" value="DacA"/>
    <property type="match status" value="1"/>
</dbReference>
<dbReference type="InterPro" id="IPR014046">
    <property type="entry name" value="C-di-AMP_synthase"/>
</dbReference>
<dbReference type="InterPro" id="IPR034701">
    <property type="entry name" value="CdaA"/>
</dbReference>
<dbReference type="InterPro" id="IPR045585">
    <property type="entry name" value="CdaA_N"/>
</dbReference>
<dbReference type="InterPro" id="IPR050338">
    <property type="entry name" value="DisA"/>
</dbReference>
<dbReference type="InterPro" id="IPR036888">
    <property type="entry name" value="DNA_integrity_DisA_N_sf"/>
</dbReference>
<dbReference type="InterPro" id="IPR003390">
    <property type="entry name" value="DNA_integrity_scan_DisA_N"/>
</dbReference>
<dbReference type="NCBIfam" id="TIGR00159">
    <property type="entry name" value="diadenylate cyclase CdaA"/>
    <property type="match status" value="1"/>
</dbReference>
<dbReference type="PANTHER" id="PTHR34185">
    <property type="entry name" value="DIADENYLATE CYCLASE"/>
    <property type="match status" value="1"/>
</dbReference>
<dbReference type="PANTHER" id="PTHR34185:SF1">
    <property type="entry name" value="DIADENYLATE CYCLASE"/>
    <property type="match status" value="1"/>
</dbReference>
<dbReference type="Pfam" id="PF19293">
    <property type="entry name" value="CdaA_N"/>
    <property type="match status" value="1"/>
</dbReference>
<dbReference type="Pfam" id="PF02457">
    <property type="entry name" value="DAC"/>
    <property type="match status" value="1"/>
</dbReference>
<dbReference type="PIRSF" id="PIRSF004793">
    <property type="entry name" value="UCP004793"/>
    <property type="match status" value="1"/>
</dbReference>
<dbReference type="SUPFAM" id="SSF143597">
    <property type="entry name" value="YojJ-like"/>
    <property type="match status" value="1"/>
</dbReference>
<dbReference type="PROSITE" id="PS51794">
    <property type="entry name" value="DAC"/>
    <property type="match status" value="1"/>
</dbReference>
<name>CDAA_BACSU</name>
<keyword id="KW-0002">3D-structure</keyword>
<keyword id="KW-0067">ATP-binding</keyword>
<keyword id="KW-1003">Cell membrane</keyword>
<keyword id="KW-0472">Membrane</keyword>
<keyword id="KW-0547">Nucleotide-binding</keyword>
<keyword id="KW-0548">Nucleotidyltransferase</keyword>
<keyword id="KW-1185">Reference proteome</keyword>
<keyword id="KW-0808">Transferase</keyword>
<keyword id="KW-0812">Transmembrane</keyword>
<keyword id="KW-1133">Transmembrane helix</keyword>
<evidence type="ECO:0000255" key="1">
    <source>
        <dbReference type="HAMAP-Rule" id="MF_01499"/>
    </source>
</evidence>
<evidence type="ECO:0000255" key="2">
    <source>
        <dbReference type="PROSITE-ProRule" id="PRU01130"/>
    </source>
</evidence>
<evidence type="ECO:0000269" key="3">
    <source>
    </source>
</evidence>
<evidence type="ECO:0000269" key="4">
    <source>
    </source>
</evidence>
<evidence type="ECO:0000269" key="5">
    <source>
    </source>
</evidence>
<evidence type="ECO:0000269" key="6">
    <source>
    </source>
</evidence>
<evidence type="ECO:0000303" key="7">
    <source>
    </source>
</evidence>
<evidence type="ECO:0000303" key="8">
    <source>
    </source>
</evidence>
<evidence type="ECO:0000305" key="9"/>
<evidence type="ECO:0000305" key="10">
    <source>
    </source>
</evidence>
<evidence type="ECO:0007829" key="11">
    <source>
        <dbReference type="PDB" id="6HUW"/>
    </source>
</evidence>
<gene>
    <name evidence="8" type="primary">cdaA</name>
    <name type="synonym">ybbP</name>
    <name type="ordered locus">BSU01750</name>
</gene>
<feature type="chain" id="PRO_0000360441" description="Cyclic di-AMP synthase CdaA">
    <location>
        <begin position="1"/>
        <end position="273"/>
    </location>
</feature>
<feature type="transmembrane region" description="Helical" evidence="1">
    <location>
        <begin position="12"/>
        <end position="32"/>
    </location>
</feature>
<feature type="transmembrane region" description="Helical" evidence="1">
    <location>
        <begin position="40"/>
        <end position="60"/>
    </location>
</feature>
<feature type="transmembrane region" description="Helical" evidence="1">
    <location>
        <begin position="61"/>
        <end position="81"/>
    </location>
</feature>
<feature type="domain" description="DAC" evidence="2">
    <location>
        <begin position="82"/>
        <end position="242"/>
    </location>
</feature>
<feature type="sequence conflict" description="In Ref. 1; BAA19509." evidence="9" ref="1">
    <original>K</original>
    <variation>R</variation>
    <location>
        <position position="270"/>
    </location>
</feature>
<feature type="turn" evidence="11">
    <location>
        <begin position="108"/>
        <end position="113"/>
    </location>
</feature>
<feature type="helix" evidence="11">
    <location>
        <begin position="114"/>
        <end position="126"/>
    </location>
</feature>
<feature type="strand" evidence="11">
    <location>
        <begin position="130"/>
        <end position="134"/>
    </location>
</feature>
<feature type="helix" evidence="11">
    <location>
        <begin position="141"/>
        <end position="144"/>
    </location>
</feature>
<feature type="strand" evidence="11">
    <location>
        <begin position="147"/>
        <end position="153"/>
    </location>
</feature>
<feature type="helix" evidence="11">
    <location>
        <begin position="156"/>
        <end position="162"/>
    </location>
</feature>
<feature type="strand" evidence="11">
    <location>
        <begin position="171"/>
        <end position="177"/>
    </location>
</feature>
<feature type="strand" evidence="11">
    <location>
        <begin position="180"/>
        <end position="186"/>
    </location>
</feature>
<feature type="strand" evidence="11">
    <location>
        <begin position="198"/>
        <end position="200"/>
    </location>
</feature>
<feature type="helix" evidence="11">
    <location>
        <begin position="203"/>
        <end position="213"/>
    </location>
</feature>
<feature type="strand" evidence="11">
    <location>
        <begin position="217"/>
        <end position="221"/>
    </location>
</feature>
<feature type="turn" evidence="11">
    <location>
        <begin position="223"/>
        <end position="225"/>
    </location>
</feature>
<feature type="strand" evidence="11">
    <location>
        <begin position="228"/>
        <end position="232"/>
    </location>
</feature>
<feature type="strand" evidence="11">
    <location>
        <begin position="235"/>
        <end position="237"/>
    </location>
</feature>
<feature type="helix" evidence="11">
    <location>
        <begin position="242"/>
        <end position="251"/>
    </location>
</feature>
<protein>
    <recommendedName>
        <fullName evidence="7 8">Cyclic di-AMP synthase CdaA</fullName>
        <shortName>c-di-AMP synthase</shortName>
        <ecNumber evidence="1">2.7.7.85</ecNumber>
    </recommendedName>
    <alternativeName>
        <fullName>Diadenylate cyclase</fullName>
        <shortName evidence="1">DAC</shortName>
    </alternativeName>
</protein>
<reference key="1">
    <citation type="journal article" date="1997" name="Microbiology">
        <title>Sequence and analysis of a 31 kb segment of the Bacillus subtilis chromosome in the area of the rrnH and rrnG operons.</title>
        <authorList>
            <person name="Liu H."/>
            <person name="Haga K."/>
            <person name="Yasumoto K."/>
            <person name="Ohashi Y."/>
            <person name="Yoshikawa H."/>
            <person name="Takahashi H."/>
        </authorList>
    </citation>
    <scope>NUCLEOTIDE SEQUENCE [GENOMIC DNA]</scope>
    <source>
        <strain>168</strain>
    </source>
</reference>
<reference key="2">
    <citation type="journal article" date="1997" name="Nature">
        <title>The complete genome sequence of the Gram-positive bacterium Bacillus subtilis.</title>
        <authorList>
            <person name="Kunst F."/>
            <person name="Ogasawara N."/>
            <person name="Moszer I."/>
            <person name="Albertini A.M."/>
            <person name="Alloni G."/>
            <person name="Azevedo V."/>
            <person name="Bertero M.G."/>
            <person name="Bessieres P."/>
            <person name="Bolotin A."/>
            <person name="Borchert S."/>
            <person name="Borriss R."/>
            <person name="Boursier L."/>
            <person name="Brans A."/>
            <person name="Braun M."/>
            <person name="Brignell S.C."/>
            <person name="Bron S."/>
            <person name="Brouillet S."/>
            <person name="Bruschi C.V."/>
            <person name="Caldwell B."/>
            <person name="Capuano V."/>
            <person name="Carter N.M."/>
            <person name="Choi S.-K."/>
            <person name="Codani J.-J."/>
            <person name="Connerton I.F."/>
            <person name="Cummings N.J."/>
            <person name="Daniel R.A."/>
            <person name="Denizot F."/>
            <person name="Devine K.M."/>
            <person name="Duesterhoeft A."/>
            <person name="Ehrlich S.D."/>
            <person name="Emmerson P.T."/>
            <person name="Entian K.-D."/>
            <person name="Errington J."/>
            <person name="Fabret C."/>
            <person name="Ferrari E."/>
            <person name="Foulger D."/>
            <person name="Fritz C."/>
            <person name="Fujita M."/>
            <person name="Fujita Y."/>
            <person name="Fuma S."/>
            <person name="Galizzi A."/>
            <person name="Galleron N."/>
            <person name="Ghim S.-Y."/>
            <person name="Glaser P."/>
            <person name="Goffeau A."/>
            <person name="Golightly E.J."/>
            <person name="Grandi G."/>
            <person name="Guiseppi G."/>
            <person name="Guy B.J."/>
            <person name="Haga K."/>
            <person name="Haiech J."/>
            <person name="Harwood C.R."/>
            <person name="Henaut A."/>
            <person name="Hilbert H."/>
            <person name="Holsappel S."/>
            <person name="Hosono S."/>
            <person name="Hullo M.-F."/>
            <person name="Itaya M."/>
            <person name="Jones L.-M."/>
            <person name="Joris B."/>
            <person name="Karamata D."/>
            <person name="Kasahara Y."/>
            <person name="Klaerr-Blanchard M."/>
            <person name="Klein C."/>
            <person name="Kobayashi Y."/>
            <person name="Koetter P."/>
            <person name="Koningstein G."/>
            <person name="Krogh S."/>
            <person name="Kumano M."/>
            <person name="Kurita K."/>
            <person name="Lapidus A."/>
            <person name="Lardinois S."/>
            <person name="Lauber J."/>
            <person name="Lazarevic V."/>
            <person name="Lee S.-M."/>
            <person name="Levine A."/>
            <person name="Liu H."/>
            <person name="Masuda S."/>
            <person name="Mauel C."/>
            <person name="Medigue C."/>
            <person name="Medina N."/>
            <person name="Mellado R.P."/>
            <person name="Mizuno M."/>
            <person name="Moestl D."/>
            <person name="Nakai S."/>
            <person name="Noback M."/>
            <person name="Noone D."/>
            <person name="O'Reilly M."/>
            <person name="Ogawa K."/>
            <person name="Ogiwara A."/>
            <person name="Oudega B."/>
            <person name="Park S.-H."/>
            <person name="Parro V."/>
            <person name="Pohl T.M."/>
            <person name="Portetelle D."/>
            <person name="Porwollik S."/>
            <person name="Prescott A.M."/>
            <person name="Presecan E."/>
            <person name="Pujic P."/>
            <person name="Purnelle B."/>
            <person name="Rapoport G."/>
            <person name="Rey M."/>
            <person name="Reynolds S."/>
            <person name="Rieger M."/>
            <person name="Rivolta C."/>
            <person name="Rocha E."/>
            <person name="Roche B."/>
            <person name="Rose M."/>
            <person name="Sadaie Y."/>
            <person name="Sato T."/>
            <person name="Scanlan E."/>
            <person name="Schleich S."/>
            <person name="Schroeter R."/>
            <person name="Scoffone F."/>
            <person name="Sekiguchi J."/>
            <person name="Sekowska A."/>
            <person name="Seror S.J."/>
            <person name="Serror P."/>
            <person name="Shin B.-S."/>
            <person name="Soldo B."/>
            <person name="Sorokin A."/>
            <person name="Tacconi E."/>
            <person name="Takagi T."/>
            <person name="Takahashi H."/>
            <person name="Takemaru K."/>
            <person name="Takeuchi M."/>
            <person name="Tamakoshi A."/>
            <person name="Tanaka T."/>
            <person name="Terpstra P."/>
            <person name="Tognoni A."/>
            <person name="Tosato V."/>
            <person name="Uchiyama S."/>
            <person name="Vandenbol M."/>
            <person name="Vannier F."/>
            <person name="Vassarotti A."/>
            <person name="Viari A."/>
            <person name="Wambutt R."/>
            <person name="Wedler E."/>
            <person name="Wedler H."/>
            <person name="Weitzenegger T."/>
            <person name="Winters P."/>
            <person name="Wipat A."/>
            <person name="Yamamoto H."/>
            <person name="Yamane K."/>
            <person name="Yasumoto K."/>
            <person name="Yata K."/>
            <person name="Yoshida K."/>
            <person name="Yoshikawa H.-F."/>
            <person name="Zumstein E."/>
            <person name="Yoshikawa H."/>
            <person name="Danchin A."/>
        </authorList>
    </citation>
    <scope>NUCLEOTIDE SEQUENCE [LARGE SCALE GENOMIC DNA]</scope>
    <source>
        <strain>168</strain>
    </source>
</reference>
<reference key="3">
    <citation type="journal article" date="2009" name="Microbiology">
        <title>From a consortium sequence to a unified sequence: the Bacillus subtilis 168 reference genome a decade later.</title>
        <authorList>
            <person name="Barbe V."/>
            <person name="Cruveiller S."/>
            <person name="Kunst F."/>
            <person name="Lenoble P."/>
            <person name="Meurice G."/>
            <person name="Sekowska A."/>
            <person name="Vallenet D."/>
            <person name="Wang T."/>
            <person name="Moszer I."/>
            <person name="Medigue C."/>
            <person name="Danchin A."/>
        </authorList>
    </citation>
    <scope>SEQUENCE REVISION TO 270</scope>
</reference>
<reference key="4">
    <citation type="journal article" date="2012" name="Mol. Microbiol.">
        <title>Analysis of the role of Bacillus subtilis sigma(M) in beta-lactam resistance reveals an essential role for c-di-AMP in peptidoglycan homeostasis.</title>
        <authorList>
            <person name="Luo Y."/>
            <person name="Helmann J.D."/>
        </authorList>
    </citation>
    <scope>PROBABLE FUNCTION</scope>
    <scope>DISRUPTION PHENOTYPE</scope>
    <source>
        <strain>168</strain>
    </source>
</reference>
<reference key="5">
    <citation type="journal article" date="2013" name="J. Biol. Chem.">
        <title>Cyclic di-AMP homeostasis in Bacillus subtilis: both lack and high level accumulation of the nucleotide are detrimental for cell growth.</title>
        <authorList>
            <person name="Mehne F.M."/>
            <person name="Gunka K."/>
            <person name="Eilers H."/>
            <person name="Herzberg C."/>
            <person name="Kaever V."/>
            <person name="Stuelke J."/>
        </authorList>
    </citation>
    <scope>FUNCTION</scope>
    <scope>ACTIVITY REGULATION</scope>
    <scope>INTERACTION WITH CDAR</scope>
    <scope>INDUCTION</scope>
    <scope>DISRUPTION PHENOTYPE</scope>
</reference>
<reference key="6">
    <citation type="journal article" date="2015" name="DNA Repair">
        <title>DisA and c-di-AMP act at the intersection between DNA-damage response and stress homeostasis in exponentially growing Bacillus subtilis cells.</title>
        <authorList>
            <person name="Gandara C."/>
            <person name="Alonso J.C."/>
        </authorList>
    </citation>
    <scope>DISRUPTION PHENOTYPE</scope>
    <source>
        <strain>168</strain>
        <strain>168 / YB886 / BG214</strain>
    </source>
</reference>
<reference key="7">
    <citation type="journal article" date="2015" name="J. Bacteriol.">
        <title>An essential poison: synthesis and degradation of cyclic di-AMP in Bacillus subtilis.</title>
        <authorList>
            <person name="Gundlach J."/>
            <person name="Mehne F.M."/>
            <person name="Herzberg C."/>
            <person name="Kampf J."/>
            <person name="Valerius O."/>
            <person name="Kaever V."/>
            <person name="Stuelke J."/>
        </authorList>
    </citation>
    <scope>FUNCTION</scope>
    <scope>SUBUNIT</scope>
    <scope>INTERACTION WITH CDAR</scope>
    <scope>SUBCELLULAR LOCATION</scope>
    <source>
        <strain>168</strain>
    </source>
</reference>
<accession>Q45589</accession>
<accession>Q45590</accession>
<accession>Q7DL98</accession>
<proteinExistence type="evidence at protein level"/>
<comment type="function">
    <text evidence="4 6 10">One of 3 paralogous diadenylate cyclases (DAC) in this bacteria, catalyzing the condensation of 2 ATP molecules into cyclic di-AMP (c-di-AMP) (Probable). Upon expression in E.coli leads to c-di-AMP synthesis (PubMed:23192352). Probably the main producer of c-di-AMP for the cell; is probably implicated in control of peptidoglycan synthesis (PubMed:22211522, PubMed:23192352, PubMed:26240071). In B.subtilis c-di-AMP is a second messenger that mediates growth, DNA repair and cell wall homeostasis; it is toxic when present in excess (PubMed:26240071).</text>
</comment>
<comment type="catalytic activity">
    <reaction evidence="1">
        <text>2 ATP = 3',3'-c-di-AMP + 2 diphosphate</text>
        <dbReference type="Rhea" id="RHEA:35655"/>
        <dbReference type="ChEBI" id="CHEBI:30616"/>
        <dbReference type="ChEBI" id="CHEBI:33019"/>
        <dbReference type="ChEBI" id="CHEBI:71500"/>
        <dbReference type="EC" id="2.7.7.85"/>
    </reaction>
</comment>
<comment type="activity regulation">
    <text evidence="4">DAC activity is stimulated about 20-fold in E.coli by coexpression with CdaR (PubMed:23192352).</text>
</comment>
<comment type="subunit">
    <text evidence="1 4 6">Probably a homodimer (By similarity). Interacts with CdaR (PubMed:23192352, PubMed:26240071). May interact with GlmM (PubMed:26240071).</text>
</comment>
<comment type="subcellular location">
    <subcellularLocation>
        <location evidence="1 6">Cell membrane</location>
        <topology evidence="1">Multi-pass membrane protein</topology>
    </subcellularLocation>
</comment>
<comment type="induction">
    <text evidence="4">Constitutively expressed, part of the cdaA-cdaR-glmM-glmS operon (PubMed:23192352).</text>
</comment>
<comment type="disruption phenotype">
    <text evidence="3 4 5">Increased sensitivity to the beta-lactam antibiotic cefuroxime (CEF), upon overexpression of the c-di-AMP phosphodiesterase GdpP greatly increased sensitivity to CEF (PubMed:22211522). Double disA-cdaA mutants cannot be made, suggesting they are lethal, while double disA-cdaS and cdaA-cdaS mutants are viable (PubMed:22211522, PubMed:23192352). Depletion of cdaA in double disA-cdaA deletion cells leads to cell lysis (PubMed:22211522). Exponentially growing cells are extremely sensitive to H(2)O(2), no change in response to methyl methanesulfonate (PubMed:25616256).</text>
</comment>
<comment type="similarity">
    <text evidence="1">Belongs to the adenylate cyclase family. DacA/CdaA subfamily.</text>
</comment>